<name>NQOR_ECOLI</name>
<keyword id="KW-0002">3D-structure</keyword>
<keyword id="KW-0007">Acetylation</keyword>
<keyword id="KW-0903">Direct protein sequencing</keyword>
<keyword id="KW-0285">Flavoprotein</keyword>
<keyword id="KW-0288">FMN</keyword>
<keyword id="KW-0520">NAD</keyword>
<keyword id="KW-0547">Nucleotide-binding</keyword>
<keyword id="KW-0560">Oxidoreductase</keyword>
<keyword id="KW-1185">Reference proteome</keyword>
<evidence type="ECO:0000255" key="1">
    <source>
        <dbReference type="HAMAP-Rule" id="MF_01017"/>
    </source>
</evidence>
<evidence type="ECO:0000269" key="2">
    <source>
    </source>
</evidence>
<evidence type="ECO:0000269" key="3">
    <source>
    </source>
</evidence>
<evidence type="ECO:0000269" key="4">
    <source>
    </source>
</evidence>
<evidence type="ECO:0000269" key="5">
    <source>
    </source>
</evidence>
<evidence type="ECO:0000269" key="6">
    <source>
    </source>
</evidence>
<evidence type="ECO:0000269" key="7">
    <source>
    </source>
</evidence>
<evidence type="ECO:0000269" key="8">
    <source>
    </source>
</evidence>
<evidence type="ECO:0000305" key="9"/>
<evidence type="ECO:0000305" key="10">
    <source>
    </source>
</evidence>
<evidence type="ECO:0000305" key="11">
    <source>
    </source>
</evidence>
<evidence type="ECO:0007744" key="12">
    <source>
        <dbReference type="PDB" id="2R96"/>
    </source>
</evidence>
<evidence type="ECO:0007744" key="13">
    <source>
        <dbReference type="PDB" id="2R97"/>
    </source>
</evidence>
<evidence type="ECO:0007744" key="14">
    <source>
        <dbReference type="PDB" id="2RG1"/>
    </source>
</evidence>
<evidence type="ECO:0007744" key="15">
    <source>
        <dbReference type="PDB" id="3B6I"/>
    </source>
</evidence>
<evidence type="ECO:0007744" key="16">
    <source>
        <dbReference type="PDB" id="3B6J"/>
    </source>
</evidence>
<evidence type="ECO:0007744" key="17">
    <source>
        <dbReference type="PDB" id="3B6K"/>
    </source>
</evidence>
<evidence type="ECO:0007744" key="18">
    <source>
        <dbReference type="PDB" id="3B6M"/>
    </source>
</evidence>
<evidence type="ECO:0007829" key="19">
    <source>
        <dbReference type="PDB" id="2R97"/>
    </source>
</evidence>
<evidence type="ECO:0007829" key="20">
    <source>
        <dbReference type="PDB" id="3B6M"/>
    </source>
</evidence>
<evidence type="ECO:0007829" key="21">
    <source>
        <dbReference type="PDB" id="3ZHO"/>
    </source>
</evidence>
<evidence type="ECO:0007829" key="22">
    <source>
        <dbReference type="PDB" id="4YQE"/>
    </source>
</evidence>
<evidence type="ECO:0007829" key="23">
    <source>
        <dbReference type="PDB" id="5F12"/>
    </source>
</evidence>
<proteinExistence type="evidence at protein level"/>
<sequence>MAKVLVLYYSMYGHIETMARAVAEGASKVDGAEVVVKRVPETMPPQLFEKAGGKTQTAPVATPQELADYDAIIFGTPTRFGNMSGQMRTFLDQTGGLWASGALYGKLASVFSSTGTGGGQEQTITSTWTTLAHHGMVIVPIGYAAQELFDVSQVRGGTPYGATTIAGGDGSRQPSQEELSIARYQGEYVAGLAVKLNG</sequence>
<organism>
    <name type="scientific">Escherichia coli (strain K12)</name>
    <dbReference type="NCBI Taxonomy" id="83333"/>
    <lineage>
        <taxon>Bacteria</taxon>
        <taxon>Pseudomonadati</taxon>
        <taxon>Pseudomonadota</taxon>
        <taxon>Gammaproteobacteria</taxon>
        <taxon>Enterobacterales</taxon>
        <taxon>Enterobacteriaceae</taxon>
        <taxon>Escherichia</taxon>
    </lineage>
</organism>
<gene>
    <name type="primary">wrbA</name>
    <name type="ordered locus">b1004</name>
    <name type="ordered locus">JW0989</name>
</gene>
<feature type="initiator methionine" description="Removed" evidence="2 7 8">
    <location>
        <position position="1"/>
    </location>
</feature>
<feature type="chain" id="PRO_0000200746" description="NAD(P)H dehydrogenase (quinone)">
    <location>
        <begin position="2"/>
        <end position="198"/>
    </location>
</feature>
<feature type="domain" description="Flavodoxin-like" evidence="1">
    <location>
        <begin position="4"/>
        <end position="189"/>
    </location>
</feature>
<feature type="binding site" evidence="1 4 6">
    <location>
        <begin position="10"/>
        <end position="15"/>
    </location>
    <ligand>
        <name>FMN</name>
        <dbReference type="ChEBI" id="CHEBI:58210"/>
    </ligand>
</feature>
<feature type="binding site" evidence="4">
    <location>
        <position position="12"/>
    </location>
    <ligand>
        <name>NAD(+)</name>
        <dbReference type="ChEBI" id="CHEBI:57540"/>
    </ligand>
</feature>
<feature type="binding site" evidence="4">
    <location>
        <position position="51"/>
    </location>
    <ligand>
        <name>NAD(+)</name>
        <dbReference type="ChEBI" id="CHEBI:57540"/>
    </ligand>
</feature>
<feature type="binding site" evidence="1 4 6">
    <location>
        <begin position="78"/>
        <end position="80"/>
    </location>
    <ligand>
        <name>FMN</name>
        <dbReference type="ChEBI" id="CHEBI:58210"/>
    </ligand>
</feature>
<feature type="binding site" evidence="1 10">
    <location>
        <position position="98"/>
    </location>
    <ligand>
        <name>substrate</name>
    </ligand>
</feature>
<feature type="binding site" evidence="1 4 6">
    <location>
        <begin position="113"/>
        <end position="118"/>
    </location>
    <ligand>
        <name>FMN</name>
        <dbReference type="ChEBI" id="CHEBI:58210"/>
    </ligand>
</feature>
<feature type="binding site" evidence="1 4 6">
    <location>
        <position position="133"/>
    </location>
    <ligand>
        <name>FMN</name>
        <dbReference type="ChEBI" id="CHEBI:58210"/>
    </ligand>
</feature>
<feature type="binding site" evidence="4">
    <location>
        <position position="169"/>
    </location>
    <ligand>
        <name>NAD(+)</name>
        <dbReference type="ChEBI" id="CHEBI:57540"/>
    </ligand>
</feature>
<feature type="modified residue" description="N6-acetyllysine" evidence="5">
    <location>
        <position position="50"/>
    </location>
</feature>
<feature type="sequence conflict" description="In Ref. 1; AAA24759." evidence="9" ref="1">
    <original>G</original>
    <variation>A</variation>
    <location>
        <position position="142"/>
    </location>
</feature>
<feature type="strand" evidence="21">
    <location>
        <begin position="3"/>
        <end position="8"/>
    </location>
</feature>
<feature type="strand" evidence="21">
    <location>
        <begin position="11"/>
        <end position="13"/>
    </location>
</feature>
<feature type="helix" evidence="21">
    <location>
        <begin position="14"/>
        <end position="27"/>
    </location>
</feature>
<feature type="strand" evidence="21">
    <location>
        <begin position="33"/>
        <end position="38"/>
    </location>
</feature>
<feature type="helix" evidence="21">
    <location>
        <begin position="45"/>
        <end position="50"/>
    </location>
</feature>
<feature type="helix" evidence="21">
    <location>
        <begin position="64"/>
        <end position="68"/>
    </location>
</feature>
<feature type="strand" evidence="21">
    <location>
        <begin position="70"/>
        <end position="77"/>
    </location>
</feature>
<feature type="helix" evidence="21">
    <location>
        <begin position="85"/>
        <end position="91"/>
    </location>
</feature>
<feature type="helix" evidence="21">
    <location>
        <begin position="95"/>
        <end position="100"/>
    </location>
</feature>
<feature type="turn" evidence="21">
    <location>
        <begin position="101"/>
        <end position="105"/>
    </location>
</feature>
<feature type="strand" evidence="21">
    <location>
        <begin position="107"/>
        <end position="117"/>
    </location>
</feature>
<feature type="helix" evidence="21">
    <location>
        <begin position="120"/>
        <end position="133"/>
    </location>
</feature>
<feature type="strand" evidence="19">
    <location>
        <begin position="137"/>
        <end position="139"/>
    </location>
</feature>
<feature type="helix" evidence="20">
    <location>
        <begin position="142"/>
        <end position="145"/>
    </location>
</feature>
<feature type="helix" evidence="21">
    <location>
        <begin position="146"/>
        <end position="148"/>
    </location>
</feature>
<feature type="strand" evidence="21">
    <location>
        <begin position="149"/>
        <end position="152"/>
    </location>
</feature>
<feature type="strand" evidence="23">
    <location>
        <begin position="159"/>
        <end position="161"/>
    </location>
</feature>
<feature type="strand" evidence="22">
    <location>
        <begin position="163"/>
        <end position="165"/>
    </location>
</feature>
<feature type="helix" evidence="21">
    <location>
        <begin position="176"/>
        <end position="197"/>
    </location>
</feature>
<protein>
    <recommendedName>
        <fullName evidence="1">NAD(P)H dehydrogenase (quinone)</fullName>
        <ecNumber evidence="1 2">1.6.5.2</ecNumber>
    </recommendedName>
    <alternativeName>
        <fullName>Flavoprotein WrbA</fullName>
    </alternativeName>
    <alternativeName>
        <fullName evidence="1">NAD(P)H:quinone oxidoreductase</fullName>
        <shortName evidence="1">NQO</shortName>
    </alternativeName>
</protein>
<comment type="function">
    <text evidence="2 8">It seems to function in response to environmental stress when various electron transfer chains are affected or when the environment is highly oxidizing. It reduces quinones to the hydroquinone state to prevent interaction of the semiquinone with O2 and production of superoxide. It prefers NADH over NADPH.</text>
</comment>
<comment type="catalytic activity">
    <reaction evidence="1 2">
        <text>a quinone + NADH + H(+) = a quinol + NAD(+)</text>
        <dbReference type="Rhea" id="RHEA:46160"/>
        <dbReference type="ChEBI" id="CHEBI:15378"/>
        <dbReference type="ChEBI" id="CHEBI:24646"/>
        <dbReference type="ChEBI" id="CHEBI:57540"/>
        <dbReference type="ChEBI" id="CHEBI:57945"/>
        <dbReference type="ChEBI" id="CHEBI:132124"/>
        <dbReference type="EC" id="1.6.5.2"/>
    </reaction>
</comment>
<comment type="catalytic activity">
    <reaction evidence="1 2">
        <text>a quinone + NADPH + H(+) = a quinol + NADP(+)</text>
        <dbReference type="Rhea" id="RHEA:46164"/>
        <dbReference type="ChEBI" id="CHEBI:15378"/>
        <dbReference type="ChEBI" id="CHEBI:24646"/>
        <dbReference type="ChEBI" id="CHEBI:57783"/>
        <dbReference type="ChEBI" id="CHEBI:58349"/>
        <dbReference type="ChEBI" id="CHEBI:132124"/>
        <dbReference type="EC" id="1.6.5.2"/>
    </reaction>
</comment>
<comment type="cofactor">
    <cofactor evidence="1 2 8">
        <name>FMN</name>
        <dbReference type="ChEBI" id="CHEBI:58210"/>
    </cofactor>
    <text evidence="1 2 8">Binds 1 FMN per monomer.</text>
</comment>
<comment type="biophysicochemical properties">
    <kinetics>
        <KM evidence="2">5.8 uM for benzoquinone</KM>
        <KM evidence="2">14 uM for NADH</KM>
    </kinetics>
</comment>
<comment type="subunit">
    <text evidence="3 4 6 8">Homodimer and homotetramer; in equilibrium.</text>
</comment>
<comment type="interaction">
    <interactant intactId="EBI-553971">
        <id>P0A8G6</id>
    </interactant>
    <interactant intactId="EBI-553971">
        <id>P0A8G6</id>
        <label>wrbA</label>
    </interactant>
    <organismsDiffer>false</organismsDiffer>
    <experiments>2</experiments>
</comment>
<comment type="disruption phenotype">
    <text evidence="3">Cells lacking this gene show no phenotypes, however, N-trichloromethyl-mercapto-4-cyclohexene-1,2-dicarboximide and 8-hydroxyquinoline significantly inhibit the growth of the wrbA knockout relative to the wild-type, which is consistent with a role for WrbA in protecting against environmental stressors through its quinone reductase activity.</text>
</comment>
<comment type="miscellaneous">
    <text evidence="11">FMN promotes WrbA association into tetramers, which are more thermoresistant than dimers or monomers, suggesting that multimerization underlies the FMN effect on WrbA thermostability.</text>
</comment>
<comment type="similarity">
    <text evidence="1 9">Belongs to the WrbA family.</text>
</comment>
<comment type="caution">
    <text evidence="11">Was originally (PubMed:9694845) thought to enhance the formation and/or stability of non-covalent complexes between the trp repressor protein and operator-bearing DNA. However, WrbA does not specifically influence the affinity or mode of binding of TrpR to its operator.</text>
</comment>
<accession>P0A8G6</accession>
<accession>P30849</accession>
<accession>P75890</accession>
<accession>P77543</accession>
<dbReference type="EC" id="1.6.5.2" evidence="1 2"/>
<dbReference type="EMBL" id="M99166">
    <property type="protein sequence ID" value="AAA24759.1"/>
    <property type="molecule type" value="Genomic_DNA"/>
</dbReference>
<dbReference type="EMBL" id="U00096">
    <property type="protein sequence ID" value="AAC74089.1"/>
    <property type="molecule type" value="Genomic_DNA"/>
</dbReference>
<dbReference type="EMBL" id="AP009048">
    <property type="protein sequence ID" value="BAA35771.1"/>
    <property type="molecule type" value="Genomic_DNA"/>
</dbReference>
<dbReference type="PIR" id="B64842">
    <property type="entry name" value="B64842"/>
</dbReference>
<dbReference type="RefSeq" id="NP_415524.1">
    <property type="nucleotide sequence ID" value="NC_000913.3"/>
</dbReference>
<dbReference type="RefSeq" id="WP_001151437.1">
    <property type="nucleotide sequence ID" value="NZ_STEB01000006.1"/>
</dbReference>
<dbReference type="PDB" id="2R96">
    <property type="method" value="X-ray"/>
    <property type="resolution" value="2.60 A"/>
    <property type="chains" value="A/C=1-198"/>
</dbReference>
<dbReference type="PDB" id="2R97">
    <property type="method" value="X-ray"/>
    <property type="resolution" value="2.00 A"/>
    <property type="chains" value="A/C=1-198"/>
</dbReference>
<dbReference type="PDB" id="2RG1">
    <property type="method" value="X-ray"/>
    <property type="resolution" value="1.85 A"/>
    <property type="chains" value="A/B=1-198"/>
</dbReference>
<dbReference type="PDB" id="3B6I">
    <property type="method" value="X-ray"/>
    <property type="resolution" value="1.66 A"/>
    <property type="chains" value="A/B=1-198"/>
</dbReference>
<dbReference type="PDB" id="3B6J">
    <property type="method" value="X-ray"/>
    <property type="resolution" value="2.05 A"/>
    <property type="chains" value="A/B=1-198"/>
</dbReference>
<dbReference type="PDB" id="3B6K">
    <property type="method" value="X-ray"/>
    <property type="resolution" value="1.99 A"/>
    <property type="chains" value="A/B=1-198"/>
</dbReference>
<dbReference type="PDB" id="3B6M">
    <property type="method" value="X-ray"/>
    <property type="resolution" value="1.85 A"/>
    <property type="chains" value="A/B=1-198"/>
</dbReference>
<dbReference type="PDB" id="3ZHO">
    <property type="method" value="X-ray"/>
    <property type="resolution" value="1.20 A"/>
    <property type="chains" value="A/B=2-198"/>
</dbReference>
<dbReference type="PDB" id="4YQE">
    <property type="method" value="X-ray"/>
    <property type="resolution" value="1.33 A"/>
    <property type="chains" value="A/B=2-198"/>
</dbReference>
<dbReference type="PDB" id="5F12">
    <property type="method" value="X-ray"/>
    <property type="resolution" value="1.50 A"/>
    <property type="chains" value="A/B=2-198"/>
</dbReference>
<dbReference type="PDBsum" id="2R96"/>
<dbReference type="PDBsum" id="2R97"/>
<dbReference type="PDBsum" id="2RG1"/>
<dbReference type="PDBsum" id="3B6I"/>
<dbReference type="PDBsum" id="3B6J"/>
<dbReference type="PDBsum" id="3B6K"/>
<dbReference type="PDBsum" id="3B6M"/>
<dbReference type="PDBsum" id="3ZHO"/>
<dbReference type="PDBsum" id="4YQE"/>
<dbReference type="PDBsum" id="5F12"/>
<dbReference type="SMR" id="P0A8G6"/>
<dbReference type="BioGRID" id="4259550">
    <property type="interactions" value="26"/>
</dbReference>
<dbReference type="DIP" id="DIP-36231N"/>
<dbReference type="FunCoup" id="P0A8G6">
    <property type="interactions" value="533"/>
</dbReference>
<dbReference type="IntAct" id="P0A8G6">
    <property type="interactions" value="4"/>
</dbReference>
<dbReference type="MINT" id="P0A8G6"/>
<dbReference type="STRING" id="511145.b1004"/>
<dbReference type="iPTMnet" id="P0A8G6"/>
<dbReference type="jPOST" id="P0A8G6"/>
<dbReference type="PaxDb" id="511145-b1004"/>
<dbReference type="EnsemblBacteria" id="AAC74089">
    <property type="protein sequence ID" value="AAC74089"/>
    <property type="gene ID" value="b1004"/>
</dbReference>
<dbReference type="GeneID" id="93776407"/>
<dbReference type="GeneID" id="947263"/>
<dbReference type="KEGG" id="ecj:JW0989"/>
<dbReference type="KEGG" id="eco:b1004"/>
<dbReference type="KEGG" id="ecoc:C3026_06110"/>
<dbReference type="PATRIC" id="fig|1411691.4.peg.1267"/>
<dbReference type="EchoBASE" id="EB1502"/>
<dbReference type="eggNOG" id="COG0655">
    <property type="taxonomic scope" value="Bacteria"/>
</dbReference>
<dbReference type="HOGENOM" id="CLU_051402_0_2_6"/>
<dbReference type="InParanoid" id="P0A8G6"/>
<dbReference type="OMA" id="KFADGNP"/>
<dbReference type="OrthoDB" id="9801479at2"/>
<dbReference type="PhylomeDB" id="P0A8G6"/>
<dbReference type="BioCyc" id="EcoCyc:PD01343"/>
<dbReference type="BioCyc" id="MetaCyc:PD01343"/>
<dbReference type="BRENDA" id="1.6.5.2">
    <property type="organism ID" value="2026"/>
</dbReference>
<dbReference type="SABIO-RK" id="P0A8G6"/>
<dbReference type="EvolutionaryTrace" id="P0A8G6"/>
<dbReference type="PRO" id="PR:P0A8G6"/>
<dbReference type="Proteomes" id="UP000000625">
    <property type="component" value="Chromosome"/>
</dbReference>
<dbReference type="GO" id="GO:0005829">
    <property type="term" value="C:cytosol"/>
    <property type="evidence" value="ECO:0000314"/>
    <property type="project" value="EcoCyc"/>
</dbReference>
<dbReference type="GO" id="GO:0016020">
    <property type="term" value="C:membrane"/>
    <property type="evidence" value="ECO:0007005"/>
    <property type="project" value="UniProtKB"/>
</dbReference>
<dbReference type="GO" id="GO:0032991">
    <property type="term" value="C:protein-containing complex"/>
    <property type="evidence" value="ECO:0000314"/>
    <property type="project" value="EcoCyc"/>
</dbReference>
<dbReference type="GO" id="GO:0050660">
    <property type="term" value="F:flavin adenine dinucleotide binding"/>
    <property type="evidence" value="ECO:0007669"/>
    <property type="project" value="UniProtKB-UniRule"/>
</dbReference>
<dbReference type="GO" id="GO:0010181">
    <property type="term" value="F:FMN binding"/>
    <property type="evidence" value="ECO:0000314"/>
    <property type="project" value="EcoCyc"/>
</dbReference>
<dbReference type="GO" id="GO:0042802">
    <property type="term" value="F:identical protein binding"/>
    <property type="evidence" value="ECO:0000353"/>
    <property type="project" value="IntAct"/>
</dbReference>
<dbReference type="GO" id="GO:0051287">
    <property type="term" value="F:NAD binding"/>
    <property type="evidence" value="ECO:0007669"/>
    <property type="project" value="UniProtKB-UniRule"/>
</dbReference>
<dbReference type="GO" id="GO:0003955">
    <property type="term" value="F:NAD(P)H dehydrogenase (quinone) activity"/>
    <property type="evidence" value="ECO:0000314"/>
    <property type="project" value="EcoCyc"/>
</dbReference>
<dbReference type="GO" id="GO:0050136">
    <property type="term" value="F:NADH:ubiquinone reductase (non-electrogenic) activity"/>
    <property type="evidence" value="ECO:0007669"/>
    <property type="project" value="RHEA"/>
</dbReference>
<dbReference type="GO" id="GO:0050661">
    <property type="term" value="F:NADP binding"/>
    <property type="evidence" value="ECO:0007669"/>
    <property type="project" value="UniProtKB-UniRule"/>
</dbReference>
<dbReference type="GO" id="GO:0008753">
    <property type="term" value="F:NADPH dehydrogenase (quinone) activity"/>
    <property type="evidence" value="ECO:0007669"/>
    <property type="project" value="RHEA"/>
</dbReference>
<dbReference type="GO" id="GO:0006979">
    <property type="term" value="P:response to oxidative stress"/>
    <property type="evidence" value="ECO:0000270"/>
    <property type="project" value="EcoCyc"/>
</dbReference>
<dbReference type="FunFam" id="3.40.50.360:FF:000004">
    <property type="entry name" value="NAD(P)H dehydrogenase (quinone)"/>
    <property type="match status" value="1"/>
</dbReference>
<dbReference type="Gene3D" id="3.40.50.360">
    <property type="match status" value="1"/>
</dbReference>
<dbReference type="HAMAP" id="MF_01017">
    <property type="entry name" value="NQOR"/>
    <property type="match status" value="1"/>
</dbReference>
<dbReference type="InterPro" id="IPR008254">
    <property type="entry name" value="Flavodoxin/NO_synth"/>
</dbReference>
<dbReference type="InterPro" id="IPR029039">
    <property type="entry name" value="Flavoprotein-like_sf"/>
</dbReference>
<dbReference type="InterPro" id="IPR010089">
    <property type="entry name" value="Flavoprotein_WrbA-like"/>
</dbReference>
<dbReference type="InterPro" id="IPR005025">
    <property type="entry name" value="FMN_Rdtase-like_dom"/>
</dbReference>
<dbReference type="InterPro" id="IPR037513">
    <property type="entry name" value="NQO"/>
</dbReference>
<dbReference type="NCBIfam" id="TIGR01755">
    <property type="entry name" value="flav_wrbA"/>
    <property type="match status" value="1"/>
</dbReference>
<dbReference type="NCBIfam" id="NF002999">
    <property type="entry name" value="PRK03767.1"/>
    <property type="match status" value="1"/>
</dbReference>
<dbReference type="PANTHER" id="PTHR30546">
    <property type="entry name" value="FLAVODOXIN-RELATED PROTEIN WRBA-RELATED"/>
    <property type="match status" value="1"/>
</dbReference>
<dbReference type="PANTHER" id="PTHR30546:SF23">
    <property type="entry name" value="FLAVOPROTEIN-LIKE PROTEIN YCP4-RELATED"/>
    <property type="match status" value="1"/>
</dbReference>
<dbReference type="Pfam" id="PF03358">
    <property type="entry name" value="FMN_red"/>
    <property type="match status" value="1"/>
</dbReference>
<dbReference type="SUPFAM" id="SSF52218">
    <property type="entry name" value="Flavoproteins"/>
    <property type="match status" value="1"/>
</dbReference>
<dbReference type="PROSITE" id="PS50902">
    <property type="entry name" value="FLAVODOXIN_LIKE"/>
    <property type="match status" value="1"/>
</dbReference>
<reference key="1">
    <citation type="journal article" date="1993" name="Proc. Natl. Acad. Sci. U.S.A.">
        <title>A stationary-phase protein of Escherichia coli that affects the mode of association between the trp repressor protein and operator-bearing DNA.</title>
        <authorList>
            <person name="Yang W."/>
            <person name="Ni L."/>
            <person name="Somerville R.L."/>
        </authorList>
    </citation>
    <scope>NUCLEOTIDE SEQUENCE [GENOMIC DNA]</scope>
    <scope>PROTEIN SEQUENCE OF 2-19</scope>
    <source>
        <strain>K12</strain>
    </source>
</reference>
<reference key="2">
    <citation type="journal article" date="1996" name="DNA Res.">
        <title>A 718-kb DNA sequence of the Escherichia coli K-12 genome corresponding to the 12.7-28.0 min region on the linkage map.</title>
        <authorList>
            <person name="Oshima T."/>
            <person name="Aiba H."/>
            <person name="Baba T."/>
            <person name="Fujita K."/>
            <person name="Hayashi K."/>
            <person name="Honjo A."/>
            <person name="Ikemoto K."/>
            <person name="Inada T."/>
            <person name="Itoh T."/>
            <person name="Kajihara M."/>
            <person name="Kanai K."/>
            <person name="Kashimoto K."/>
            <person name="Kimura S."/>
            <person name="Kitagawa M."/>
            <person name="Makino K."/>
            <person name="Masuda S."/>
            <person name="Miki T."/>
            <person name="Mizobuchi K."/>
            <person name="Mori H."/>
            <person name="Motomura K."/>
            <person name="Nakamura Y."/>
            <person name="Nashimoto H."/>
            <person name="Nishio Y."/>
            <person name="Saito N."/>
            <person name="Sampei G."/>
            <person name="Seki Y."/>
            <person name="Tagami H."/>
            <person name="Takemoto K."/>
            <person name="Wada C."/>
            <person name="Yamamoto Y."/>
            <person name="Yano M."/>
            <person name="Horiuchi T."/>
        </authorList>
    </citation>
    <scope>NUCLEOTIDE SEQUENCE [LARGE SCALE GENOMIC DNA]</scope>
    <source>
        <strain>K12 / W3110 / ATCC 27325 / DSM 5911</strain>
    </source>
</reference>
<reference key="3">
    <citation type="journal article" date="1997" name="Science">
        <title>The complete genome sequence of Escherichia coli K-12.</title>
        <authorList>
            <person name="Blattner F.R."/>
            <person name="Plunkett G. III"/>
            <person name="Bloch C.A."/>
            <person name="Perna N.T."/>
            <person name="Burland V."/>
            <person name="Riley M."/>
            <person name="Collado-Vides J."/>
            <person name="Glasner J.D."/>
            <person name="Rode C.K."/>
            <person name="Mayhew G.F."/>
            <person name="Gregor J."/>
            <person name="Davis N.W."/>
            <person name="Kirkpatrick H.A."/>
            <person name="Goeden M.A."/>
            <person name="Rose D.J."/>
            <person name="Mau B."/>
            <person name="Shao Y."/>
        </authorList>
    </citation>
    <scope>NUCLEOTIDE SEQUENCE [LARGE SCALE GENOMIC DNA]</scope>
    <source>
        <strain>K12 / MG1655 / ATCC 47076</strain>
    </source>
</reference>
<reference key="4">
    <citation type="journal article" date="2006" name="Mol. Syst. Biol.">
        <title>Highly accurate genome sequences of Escherichia coli K-12 strains MG1655 and W3110.</title>
        <authorList>
            <person name="Hayashi K."/>
            <person name="Morooka N."/>
            <person name="Yamamoto Y."/>
            <person name="Fujita K."/>
            <person name="Isono K."/>
            <person name="Choi S."/>
            <person name="Ohtsubo E."/>
            <person name="Baba T."/>
            <person name="Wanner B.L."/>
            <person name="Mori H."/>
            <person name="Horiuchi T."/>
        </authorList>
    </citation>
    <scope>NUCLEOTIDE SEQUENCE [LARGE SCALE GENOMIC DNA]</scope>
    <source>
        <strain>K12 / W3110 / ATCC 27325 / DSM 5911</strain>
    </source>
</reference>
<reference key="5">
    <citation type="journal article" date="1998" name="J. Biol. Chem.">
        <title>Biochemical characterization of WrbA, founding member of a new family of multimeric flavodoxin-like proteins.</title>
        <authorList>
            <person name="Grandori R."/>
            <person name="Khalifah P."/>
            <person name="Boice J.A."/>
            <person name="Fairman R."/>
            <person name="Giovanielli K."/>
            <person name="Carey J."/>
        </authorList>
    </citation>
    <scope>PROTEIN SEQUENCE OF 2-11</scope>
    <scope>FUNCTION</scope>
    <scope>COFACTOR</scope>
    <scope>SUBUNIT</scope>
    <source>
        <strain>K12 / JM101 / ATCC 33876 / DSM 3948 / NCIMB 11926</strain>
    </source>
</reference>
<reference key="6">
    <citation type="journal article" date="2006" name="J. Bacteriol.">
        <title>WrbA from Escherichia coli and Archaeoglobus fulgidus is an NAD(P)H:quinone oxidoreductase.</title>
        <authorList>
            <person name="Patridge E.V."/>
            <person name="Ferry J.G."/>
        </authorList>
    </citation>
    <scope>PROTEIN SEQUENCE OF 2-6</scope>
    <scope>FUNCTION</scope>
    <scope>CATALYTIC ACTIVITY</scope>
    <scope>BIOPHYSICOCHEMICAL PROPERTIES</scope>
    <scope>COFACTOR</scope>
</reference>
<reference key="7">
    <citation type="journal article" date="2007" name="Biochemistry">
        <title>Role of flavin mononucleotide in the thermostability and oligomerization of Escherichia coli stress-defense protein WrbA.</title>
        <authorList>
            <person name="Natalello A."/>
            <person name="Doglia S.M."/>
            <person name="Carey J."/>
            <person name="Grandori R."/>
        </authorList>
    </citation>
    <scope>THERMOSTABILITY</scope>
    <scope>DISRUPTION PHENOTYPE</scope>
    <scope>SUBUNIT</scope>
</reference>
<reference key="8">
    <citation type="journal article" date="2009" name="Mol. Cell. Proteomics">
        <title>Lysine acetylation is a highly abundant and evolutionarily conserved modification in Escherichia coli.</title>
        <authorList>
            <person name="Zhang J."/>
            <person name="Sprung R."/>
            <person name="Pei J."/>
            <person name="Tan X."/>
            <person name="Kim S."/>
            <person name="Zhu H."/>
            <person name="Liu C.F."/>
            <person name="Grishin N.V."/>
            <person name="Zhao Y."/>
        </authorList>
    </citation>
    <scope>ACETYLATION [LARGE SCALE ANALYSIS] AT LYS-50</scope>
    <scope>IDENTIFICATION BY MASS SPECTROMETRY</scope>
    <source>
        <strain>K12 / JW1106</strain>
        <strain>K12 / MG1655 / ATCC 47076</strain>
    </source>
</reference>
<reference evidence="15 16 17 18" key="9">
    <citation type="journal article" date="2007" name="J. Bacteriol.">
        <title>Crystal structure of the NADH:quinone oxidoreductase WrbA from Escherichia coli.</title>
        <authorList>
            <person name="Andrade S.L."/>
            <person name="Patridge E.V."/>
            <person name="Ferry J.G."/>
            <person name="Einsle O."/>
        </authorList>
    </citation>
    <scope>X-RAY CRYSTALLOGRAPHY (1.66 ANGSTROMS) IN COMPLEX WITH FMN; NAD; AMP AND SUBSTRATE</scope>
    <scope>SUBUNIT</scope>
</reference>
<reference evidence="12 13 14" key="10">
    <citation type="journal article" date="2009" name="Biochim. Biophys. Acta">
        <title>Structural organization of WrbA in apo- and holoprotein crystals.</title>
        <authorList>
            <person name="Wolfova J."/>
            <person name="Smatanova I.K."/>
            <person name="Brynda J."/>
            <person name="Mesters J.R."/>
            <person name="Lapkouski M."/>
            <person name="Kuty M."/>
            <person name="Natalello A."/>
            <person name="Chatterjee N."/>
            <person name="Chern S.Y."/>
            <person name="Ebbel E."/>
            <person name="Ricci A."/>
            <person name="Grandori R."/>
            <person name="Ettrich R."/>
            <person name="Carey J."/>
        </authorList>
    </citation>
    <scope>X-RAY CRYSTALLOGRAPHY (1.85 ANGSTROMS) IN COMPLEX WITH FMN</scope>
    <scope>REACTION MECHANISM</scope>
    <scope>SUBUNIT</scope>
</reference>